<evidence type="ECO:0000250" key="1">
    <source>
        <dbReference type="UniProtKB" id="Q4KLH6"/>
    </source>
</evidence>
<evidence type="ECO:0000250" key="2">
    <source>
        <dbReference type="UniProtKB" id="Q6ZQ06"/>
    </source>
</evidence>
<evidence type="ECO:0000255" key="3"/>
<evidence type="ECO:0000256" key="4">
    <source>
        <dbReference type="SAM" id="MobiDB-lite"/>
    </source>
</evidence>
<evidence type="ECO:0000269" key="5">
    <source>
    </source>
</evidence>
<evidence type="ECO:0000303" key="6">
    <source>
    </source>
</evidence>
<evidence type="ECO:0000305" key="7"/>
<evidence type="ECO:0000305" key="8">
    <source>
    </source>
</evidence>
<evidence type="ECO:0000305" key="9">
    <source>
    </source>
</evidence>
<evidence type="ECO:0007744" key="10">
    <source>
    </source>
</evidence>
<evidence type="ECO:0007744" key="11">
    <source>
    </source>
</evidence>
<accession>Q5TB80</accession>
<accession>A6PVL7</accession>
<accession>A6PVL8</accession>
<accession>Q6P475</accession>
<accession>Q9Y2L2</accession>
<proteinExistence type="evidence at protein level"/>
<keyword id="KW-0025">Alternative splicing</keyword>
<keyword id="KW-0970">Cilium biogenesis/degradation</keyword>
<keyword id="KW-0175">Coiled coil</keyword>
<keyword id="KW-0963">Cytoplasm</keyword>
<keyword id="KW-0206">Cytoskeleton</keyword>
<keyword id="KW-0493">Microtubule</keyword>
<keyword id="KW-0539">Nucleus</keyword>
<keyword id="KW-0597">Phosphoprotein</keyword>
<keyword id="KW-1267">Proteomics identification</keyword>
<keyword id="KW-1185">Reference proteome</keyword>
<feature type="chain" id="PRO_0000295628" description="Centrosomal protein of 162 kDa">
    <location>
        <begin position="1"/>
        <end position="1403"/>
    </location>
</feature>
<feature type="region of interest" description="Disordered" evidence="4">
    <location>
        <begin position="18"/>
        <end position="42"/>
    </location>
</feature>
<feature type="region of interest" description="Disordered" evidence="4">
    <location>
        <begin position="170"/>
        <end position="231"/>
    </location>
</feature>
<feature type="region of interest" description="Disordered" evidence="4">
    <location>
        <begin position="476"/>
        <end position="504"/>
    </location>
</feature>
<feature type="coiled-coil region" evidence="3">
    <location>
        <begin position="617"/>
        <end position="670"/>
    </location>
</feature>
<feature type="coiled-coil region" evidence="3">
    <location>
        <begin position="698"/>
        <end position="1121"/>
    </location>
</feature>
<feature type="coiled-coil region" evidence="3">
    <location>
        <begin position="1171"/>
        <end position="1206"/>
    </location>
</feature>
<feature type="coiled-coil region" evidence="3">
    <location>
        <begin position="1235"/>
        <end position="1386"/>
    </location>
</feature>
<feature type="compositionally biased region" description="Basic and acidic residues" evidence="4">
    <location>
        <begin position="208"/>
        <end position="231"/>
    </location>
</feature>
<feature type="compositionally biased region" description="Basic residues" evidence="4">
    <location>
        <begin position="487"/>
        <end position="502"/>
    </location>
</feature>
<feature type="modified residue" description="Phosphoserine" evidence="2">
    <location>
        <position position="157"/>
    </location>
</feature>
<feature type="modified residue" description="Phosphoserine" evidence="1">
    <location>
        <position position="160"/>
    </location>
</feature>
<feature type="modified residue" description="Phosphoserine" evidence="10 11">
    <location>
        <position position="474"/>
    </location>
</feature>
<feature type="modified residue" description="Phosphoserine" evidence="10">
    <location>
        <position position="475"/>
    </location>
</feature>
<feature type="splice variant" id="VSP_026953" description="In isoform 2." evidence="6">
    <location>
        <begin position="1"/>
        <end position="76"/>
    </location>
</feature>
<feature type="sequence variant" id="VAR_033301" description="In dbSNP:rs17790493.">
    <original>C</original>
    <variation>S</variation>
    <location>
        <position position="266"/>
    </location>
</feature>
<feature type="sequence variant" id="VAR_033302" description="In dbSNP:rs16874323.">
    <original>E</original>
    <variation>Q</variation>
    <location>
        <position position="272"/>
    </location>
</feature>
<feature type="sequence variant" id="VAR_051293" description="In dbSNP:rs17790493.">
    <original>S</original>
    <variation>C</variation>
    <location>
        <position position="342"/>
    </location>
</feature>
<feature type="sequence variant" id="VAR_051294" description="In dbSNP:rs16874323.">
    <original>E</original>
    <variation>Q</variation>
    <location>
        <position position="348"/>
    </location>
</feature>
<feature type="sequence conflict" description="In Ref. 1; BAA76853." evidence="7" ref="1">
    <original>S</original>
    <variation>I</variation>
    <location>
        <position position="168"/>
    </location>
</feature>
<sequence>MANCSQEELDEEFEQFMKELSDDSFENSDKTARQSKKEMKKKDTVPWWITEDDFKDDGLLGTNVSYLKTKKTSQPVMEIEEESAEKIQFLKSSGTSLLSTDSLETNELVVSELNHSSLGVGLDTLEEQEEKEQFFARLEKGLTSSIDYSRLNKELDSNDSTHFKALHSNQANAELTDDEHENESKHEELAENYSDDFEDEYVGAPLTTKDEEMPSKENSKSEKISVPKQEEEKTGMLANVVLLDSLDSVAEVNLDEQDKITPKPRCLPEMTENEMTGTGVSYGQSSSDVEALHQAYCHIAHSLGDEDKQKIESNTVEDIKSSVKGHPQENEENSKNISTMESDLPTVEELMKPIRIDSFGISGFDLQPVSSEKVAERKETEFFSSLPLKMNPNILSQDSQHVNLFFDKNDENVILQKTTNESMENSCPQVTEVTATEEHVDKMYLNILRKKITVNSSSLSQDDKINKTYRSQLSSEEEGAVMGKQVPYKKARSAPPLLKRKPQSGLYASVRSSGYGKPSSPLKMFSTLEKKTSEDIIKSKNLRSISTSNQPRKKEILSGTKLIKPAALDKPAHKTESCLSTRKKSENPTETDSCIQFQTDSLGYCGENKEKKLLMFKRVQEAEDKWRGAQALIEQIKATFSEKEKELENKLEELKKQQEKELFKLNQDNYILQAKLSSFEETNKKQRWLHFGEAADPVTGEKLKQIQKEIQEQETLLQGYQQENERLYNQVKDLQEQNKKNEERMFKENQSLFSEVASLKEQMHKSRFLSQVVEDSEPTRNQNFTDLLAELRMAQKEKDSLLEDIKRLKQDKQALEVDFEKMKKERDQAKDQIAYVTGEKLYEIKILEETHKQEISRLQKRLQWYAENQELLDKDALRLREANEEIEKLKLEIEKLKAESGNPSIRQKIRLKDKAADAKKIQDLERQVKEMEGILKRRYPNSLPALILAASAAGDTVDKNTVEFMEKRIKKLEADLEGKDEDAKKSLRTMEQQFQKMKIQYEQRLEQQEQLLACKLNQHDSPRIKALEKELDDIKEAHQITVRNLEAEIDVLKHQNAELDVKKNDKDDEDFQSIEFQVEQAHAKAKLVRLNEELAAKKREIQDLSKTVERLQKDRRMMLSNQNSKGREEMSAKRAKKDVLHSSKGNANSFPGTLDSKLYQPHTFTDSHVSEVLQENYRLKNELEGLISEKNELKMKSEAVMNQFENSMRRVKEDTAAHIASLKASHQREIEKLLCQNAVENSSSKVAELNRKIATQEVLIRHFQSQVNELQSKQESLVVSEVREEILQKEITKLLEELREAKENHTPEMKHFVGLEKKIKQMEMRHAQREQELQQIIQQTHQVVETEQNKEVEKWKRLAQLKNRELEKFRTELDSILDVLRELHRQGVVVPVAFADEMNAPEY</sequence>
<name>CE162_HUMAN</name>
<protein>
    <recommendedName>
        <fullName>Centrosomal protein of 162 kDa</fullName>
        <shortName>Cep162</shortName>
    </recommendedName>
    <alternativeName>
        <fullName>Protein QN1 homolog</fullName>
    </alternativeName>
</protein>
<dbReference type="EMBL" id="AB023226">
    <property type="protein sequence ID" value="BAA76853.2"/>
    <property type="status" value="ALT_INIT"/>
    <property type="molecule type" value="mRNA"/>
</dbReference>
<dbReference type="EMBL" id="AL138742">
    <property type="status" value="NOT_ANNOTATED_CDS"/>
    <property type="molecule type" value="Genomic_DNA"/>
</dbReference>
<dbReference type="CCDS" id="CCDS34494.2">
    <molecule id="Q5TB80-1"/>
</dbReference>
<dbReference type="CCDS" id="CCDS69149.1">
    <molecule id="Q5TB80-2"/>
</dbReference>
<dbReference type="RefSeq" id="NP_001273135.1">
    <molecule id="Q5TB80-2"/>
    <property type="nucleotide sequence ID" value="NM_001286206.2"/>
</dbReference>
<dbReference type="RefSeq" id="NP_055710.2">
    <molecule id="Q5TB80-1"/>
    <property type="nucleotide sequence ID" value="NM_014895.4"/>
</dbReference>
<dbReference type="RefSeq" id="XP_006715443.1">
    <property type="nucleotide sequence ID" value="XM_006715380.2"/>
</dbReference>
<dbReference type="RefSeq" id="XP_016865973.1">
    <property type="nucleotide sequence ID" value="XM_017010484.1"/>
</dbReference>
<dbReference type="RefSeq" id="XP_047274342.1">
    <molecule id="Q5TB80-2"/>
    <property type="nucleotide sequence ID" value="XM_047418386.1"/>
</dbReference>
<dbReference type="RefSeq" id="XP_047274343.1">
    <molecule id="Q5TB80-2"/>
    <property type="nucleotide sequence ID" value="XM_047418387.1"/>
</dbReference>
<dbReference type="RefSeq" id="XP_054210656.1">
    <molecule id="Q5TB80-2"/>
    <property type="nucleotide sequence ID" value="XM_054354681.1"/>
</dbReference>
<dbReference type="RefSeq" id="XP_054210657.1">
    <molecule id="Q5TB80-2"/>
    <property type="nucleotide sequence ID" value="XM_054354682.1"/>
</dbReference>
<dbReference type="SMR" id="Q5TB80"/>
<dbReference type="BioGRID" id="116506">
    <property type="interactions" value="172"/>
</dbReference>
<dbReference type="CORUM" id="Q5TB80"/>
<dbReference type="DIP" id="DIP-50714N"/>
<dbReference type="FunCoup" id="Q5TB80">
    <property type="interactions" value="1993"/>
</dbReference>
<dbReference type="IntAct" id="Q5TB80">
    <property type="interactions" value="158"/>
</dbReference>
<dbReference type="MINT" id="Q5TB80"/>
<dbReference type="STRING" id="9606.ENSP00000385215"/>
<dbReference type="CarbonylDB" id="Q5TB80"/>
<dbReference type="GlyGen" id="Q5TB80">
    <property type="glycosylation" value="1 site, 1 O-linked glycan (1 site)"/>
</dbReference>
<dbReference type="iPTMnet" id="Q5TB80"/>
<dbReference type="PhosphoSitePlus" id="Q5TB80"/>
<dbReference type="SwissPalm" id="Q5TB80"/>
<dbReference type="BioMuta" id="CEP162"/>
<dbReference type="DMDM" id="156630849"/>
<dbReference type="jPOST" id="Q5TB80"/>
<dbReference type="MassIVE" id="Q5TB80"/>
<dbReference type="PaxDb" id="9606-ENSP00000385215"/>
<dbReference type="PeptideAtlas" id="Q5TB80"/>
<dbReference type="ProteomicsDB" id="64890">
    <molecule id="Q5TB80-1"/>
</dbReference>
<dbReference type="ProteomicsDB" id="64891">
    <molecule id="Q5TB80-2"/>
</dbReference>
<dbReference type="Pumba" id="Q5TB80"/>
<dbReference type="Antibodypedia" id="31712">
    <property type="antibodies" value="32 antibodies from 7 providers"/>
</dbReference>
<dbReference type="DNASU" id="22832"/>
<dbReference type="Ensembl" id="ENST00000257766.8">
    <molecule id="Q5TB80-2"/>
    <property type="protein sequence ID" value="ENSP00000257766.4"/>
    <property type="gene ID" value="ENSG00000135315.12"/>
</dbReference>
<dbReference type="Ensembl" id="ENST00000403245.8">
    <molecule id="Q5TB80-1"/>
    <property type="protein sequence ID" value="ENSP00000385215.3"/>
    <property type="gene ID" value="ENSG00000135315.12"/>
</dbReference>
<dbReference type="Ensembl" id="ENST00000617909.2">
    <molecule id="Q5TB80-2"/>
    <property type="protein sequence ID" value="ENSP00000481760.1"/>
    <property type="gene ID" value="ENSG00000135315.12"/>
</dbReference>
<dbReference type="GeneID" id="22832"/>
<dbReference type="KEGG" id="hsa:22832"/>
<dbReference type="MANE-Select" id="ENST00000403245.8">
    <property type="protein sequence ID" value="ENSP00000385215.3"/>
    <property type="RefSeq nucleotide sequence ID" value="NM_014895.4"/>
    <property type="RefSeq protein sequence ID" value="NP_055710.2"/>
</dbReference>
<dbReference type="UCSC" id="uc003pkj.6">
    <molecule id="Q5TB80-1"/>
    <property type="organism name" value="human"/>
</dbReference>
<dbReference type="AGR" id="HGNC:21107"/>
<dbReference type="CTD" id="22832"/>
<dbReference type="DisGeNET" id="22832"/>
<dbReference type="GeneCards" id="CEP162"/>
<dbReference type="HGNC" id="HGNC:21107">
    <property type="gene designation" value="CEP162"/>
</dbReference>
<dbReference type="HPA" id="ENSG00000135315">
    <property type="expression patterns" value="Low tissue specificity"/>
</dbReference>
<dbReference type="MalaCards" id="CEP162"/>
<dbReference type="MIM" id="610201">
    <property type="type" value="gene"/>
</dbReference>
<dbReference type="neXtProt" id="NX_Q5TB80"/>
<dbReference type="OpenTargets" id="ENSG00000135315"/>
<dbReference type="PharmGKB" id="PA134972331"/>
<dbReference type="VEuPathDB" id="HostDB:ENSG00000135315"/>
<dbReference type="eggNOG" id="ENOG502QSPF">
    <property type="taxonomic scope" value="Eukaryota"/>
</dbReference>
<dbReference type="GeneTree" id="ENSGT00390000009631"/>
<dbReference type="HOGENOM" id="CLU_005179_0_0_1"/>
<dbReference type="InParanoid" id="Q5TB80"/>
<dbReference type="OMA" id="PDMTDNE"/>
<dbReference type="OrthoDB" id="2157184at2759"/>
<dbReference type="PAN-GO" id="Q5TB80">
    <property type="GO annotations" value="4 GO annotations based on evolutionary models"/>
</dbReference>
<dbReference type="PhylomeDB" id="Q5TB80"/>
<dbReference type="TreeFam" id="TF330884"/>
<dbReference type="PathwayCommons" id="Q5TB80"/>
<dbReference type="Reactome" id="R-HSA-5620912">
    <property type="pathway name" value="Anchoring of the basal body to the plasma membrane"/>
</dbReference>
<dbReference type="SignaLink" id="Q5TB80"/>
<dbReference type="BioGRID-ORCS" id="22832">
    <property type="hits" value="14 hits in 1160 CRISPR screens"/>
</dbReference>
<dbReference type="CD-CODE" id="8C2F96ED">
    <property type="entry name" value="Centrosome"/>
</dbReference>
<dbReference type="ChiTaRS" id="CEP162">
    <property type="organism name" value="human"/>
</dbReference>
<dbReference type="GenomeRNAi" id="22832"/>
<dbReference type="Pharos" id="Q5TB80">
    <property type="development level" value="Tdark"/>
</dbReference>
<dbReference type="PRO" id="PR:Q5TB80"/>
<dbReference type="Proteomes" id="UP000005640">
    <property type="component" value="Chromosome 6"/>
</dbReference>
<dbReference type="RNAct" id="Q5TB80">
    <property type="molecule type" value="protein"/>
</dbReference>
<dbReference type="Bgee" id="ENSG00000135315">
    <property type="expression patterns" value="Expressed in calcaneal tendon and 166 other cell types or tissues"/>
</dbReference>
<dbReference type="ExpressionAtlas" id="Q5TB80">
    <property type="expression patterns" value="baseline and differential"/>
</dbReference>
<dbReference type="GO" id="GO:0005879">
    <property type="term" value="C:axonemal microtubule"/>
    <property type="evidence" value="ECO:0000314"/>
    <property type="project" value="UniProtKB"/>
</dbReference>
<dbReference type="GO" id="GO:0034451">
    <property type="term" value="C:centriolar satellite"/>
    <property type="evidence" value="ECO:0000314"/>
    <property type="project" value="HPA"/>
</dbReference>
<dbReference type="GO" id="GO:0005814">
    <property type="term" value="C:centriole"/>
    <property type="evidence" value="ECO:0000314"/>
    <property type="project" value="UniProtKB"/>
</dbReference>
<dbReference type="GO" id="GO:0005813">
    <property type="term" value="C:centrosome"/>
    <property type="evidence" value="ECO:0000314"/>
    <property type="project" value="UniProtKB"/>
</dbReference>
<dbReference type="GO" id="GO:0036064">
    <property type="term" value="C:ciliary basal body"/>
    <property type="evidence" value="ECO:0000314"/>
    <property type="project" value="HPA"/>
</dbReference>
<dbReference type="GO" id="GO:0005829">
    <property type="term" value="C:cytosol"/>
    <property type="evidence" value="ECO:0000314"/>
    <property type="project" value="HPA"/>
</dbReference>
<dbReference type="GO" id="GO:0005794">
    <property type="term" value="C:Golgi apparatus"/>
    <property type="evidence" value="ECO:0000314"/>
    <property type="project" value="HPA"/>
</dbReference>
<dbReference type="GO" id="GO:0043231">
    <property type="term" value="C:intracellular membrane-bounded organelle"/>
    <property type="evidence" value="ECO:0000314"/>
    <property type="project" value="HPA"/>
</dbReference>
<dbReference type="GO" id="GO:0005654">
    <property type="term" value="C:nucleoplasm"/>
    <property type="evidence" value="ECO:0000314"/>
    <property type="project" value="HPA"/>
</dbReference>
<dbReference type="GO" id="GO:0005819">
    <property type="term" value="C:spindle"/>
    <property type="evidence" value="ECO:0007669"/>
    <property type="project" value="UniProtKB-SubCell"/>
</dbReference>
<dbReference type="GO" id="GO:0060271">
    <property type="term" value="P:cilium assembly"/>
    <property type="evidence" value="ECO:0000315"/>
    <property type="project" value="UniProtKB"/>
</dbReference>
<dbReference type="InterPro" id="IPR038774">
    <property type="entry name" value="CEP162-like"/>
</dbReference>
<dbReference type="PANTHER" id="PTHR34031">
    <property type="entry name" value="CENTROSOMAL PROTEIN OF 162 KDA"/>
    <property type="match status" value="1"/>
</dbReference>
<dbReference type="PANTHER" id="PTHR34031:SF1">
    <property type="entry name" value="CENTROSOMAL PROTEIN OF 162 KDA"/>
    <property type="match status" value="1"/>
</dbReference>
<gene>
    <name type="primary">CEP162</name>
    <name type="synonym">C6orf84</name>
    <name type="synonym">KIAA1009</name>
    <name type="synonym">QN1</name>
</gene>
<comment type="function">
    <text evidence="5">Required to promote assembly of the transition zone in primary cilia. Acts by specifically recognizing and binding the axonemal microtubule. Localizes to the distal ends of centrioles before ciliogenesis and directly binds to axonemal microtubule, thereby promoting and restricting transition zone formation specifically at the cilia base. Required to mediate CEP290 association with microtubules.</text>
</comment>
<comment type="subunit">
    <text evidence="1 2 5">Interacts with CEP290 (PubMed:23644468). Interacts with CPNE4 (By similarity). Interacts with alpha-tubulin (By similarity).</text>
</comment>
<comment type="interaction">
    <interactant intactId="EBI-1059012">
        <id>Q5TB80</id>
    </interactant>
    <interactant intactId="EBI-2563015">
        <id>Q8N960</id>
        <label>CEP120</label>
    </interactant>
    <organismsDiffer>false</organismsDiffer>
    <experiments>6</experiments>
</comment>
<comment type="interaction">
    <interactant intactId="EBI-1059012">
        <id>Q5TB80</id>
    </interactant>
    <interactant intactId="EBI-1046993">
        <id>Q66GS9</id>
        <label>CEP135</label>
    </interactant>
    <organismsDiffer>false</organismsDiffer>
    <experiments>3</experiments>
</comment>
<comment type="interaction">
    <interactant intactId="EBI-1059012">
        <id>Q5TB80</id>
    </interactant>
    <interactant intactId="EBI-1811944">
        <id>O15078</id>
        <label>CEP290</label>
    </interactant>
    <organismsDiffer>false</organismsDiffer>
    <experiments>7</experiments>
</comment>
<comment type="subcellular location">
    <subcellularLocation>
        <location>Cytoplasm</location>
        <location>Cytoskeleton</location>
        <location>Microtubule organizing center</location>
        <location>Centrosome</location>
        <location>Centriole</location>
    </subcellularLocation>
    <subcellularLocation>
        <location>Cytoplasm</location>
        <location>Cytoskeleton</location>
        <location>Spindle</location>
    </subcellularLocation>
    <subcellularLocation>
        <location>Nucleus</location>
    </subcellularLocation>
    <text>Localizes to the distal end of centrioles throughout the cell cycle. During ciliogenesis, found at the cilia base. Localizes to spindle microtubules during mitosis.</text>
</comment>
<comment type="alternative products">
    <event type="alternative splicing"/>
    <isoform>
        <id>Q5TB80-1</id>
        <name>1</name>
        <sequence type="displayed"/>
    </isoform>
    <isoform>
        <id>Q5TB80-2</id>
        <name>2</name>
        <sequence type="described" ref="VSP_026953"/>
    </isoform>
</comment>
<comment type="miscellaneous">
    <text evidence="9">Promotes ectopic assembly of transition zone components at cilia tips when targeted outside distal ends of centrioles, generating extra-long cilia with strikingly swollen tips.</text>
</comment>
<comment type="similarity">
    <text evidence="7">Belongs to the CEP162 family.</text>
</comment>
<comment type="caution">
    <text evidence="8 9">Was initially thought to regulate chromosome segregation and mitotic spindle assembly (PubMed:16302001). However, it was later shown that its absence neither affect mitosis nor centriole duplication (PubMed:23644468).</text>
</comment>
<comment type="sequence caution" evidence="7">
    <conflict type="erroneous initiation">
        <sequence resource="EMBL-CDS" id="BAA76853"/>
    </conflict>
    <text>Truncated N-terminus.</text>
</comment>
<organism>
    <name type="scientific">Homo sapiens</name>
    <name type="common">Human</name>
    <dbReference type="NCBI Taxonomy" id="9606"/>
    <lineage>
        <taxon>Eukaryota</taxon>
        <taxon>Metazoa</taxon>
        <taxon>Chordata</taxon>
        <taxon>Craniata</taxon>
        <taxon>Vertebrata</taxon>
        <taxon>Euteleostomi</taxon>
        <taxon>Mammalia</taxon>
        <taxon>Eutheria</taxon>
        <taxon>Euarchontoglires</taxon>
        <taxon>Primates</taxon>
        <taxon>Haplorrhini</taxon>
        <taxon>Catarrhini</taxon>
        <taxon>Hominidae</taxon>
        <taxon>Homo</taxon>
    </lineage>
</organism>
<reference key="1">
    <citation type="journal article" date="1999" name="DNA Res.">
        <title>Prediction of the coding sequences of unidentified human genes. XIII. The complete sequences of 100 new cDNA clones from brain which code for large proteins in vitro.</title>
        <authorList>
            <person name="Nagase T."/>
            <person name="Ishikawa K."/>
            <person name="Suyama M."/>
            <person name="Kikuno R."/>
            <person name="Hirosawa M."/>
            <person name="Miyajima N."/>
            <person name="Tanaka A."/>
            <person name="Kotani H."/>
            <person name="Nomura N."/>
            <person name="Ohara O."/>
        </authorList>
    </citation>
    <scope>NUCLEOTIDE SEQUENCE [LARGE SCALE MRNA] (ISOFORM 2)</scope>
    <source>
        <tissue>Brain</tissue>
    </source>
</reference>
<reference key="2">
    <citation type="submission" date="2004-01" db="EMBL/GenBank/DDBJ databases">
        <authorList>
            <person name="Ohara O."/>
            <person name="Nagase T."/>
            <person name="Kikuno R."/>
        </authorList>
    </citation>
    <scope>SEQUENCE REVISION</scope>
</reference>
<reference key="3">
    <citation type="journal article" date="2003" name="Nature">
        <title>The DNA sequence and analysis of human chromosome 6.</title>
        <authorList>
            <person name="Mungall A.J."/>
            <person name="Palmer S.A."/>
            <person name="Sims S.K."/>
            <person name="Edwards C.A."/>
            <person name="Ashurst J.L."/>
            <person name="Wilming L."/>
            <person name="Jones M.C."/>
            <person name="Horton R."/>
            <person name="Hunt S.E."/>
            <person name="Scott C.E."/>
            <person name="Gilbert J.G.R."/>
            <person name="Clamp M.E."/>
            <person name="Bethel G."/>
            <person name="Milne S."/>
            <person name="Ainscough R."/>
            <person name="Almeida J.P."/>
            <person name="Ambrose K.D."/>
            <person name="Andrews T.D."/>
            <person name="Ashwell R.I.S."/>
            <person name="Babbage A.K."/>
            <person name="Bagguley C.L."/>
            <person name="Bailey J."/>
            <person name="Banerjee R."/>
            <person name="Barker D.J."/>
            <person name="Barlow K.F."/>
            <person name="Bates K."/>
            <person name="Beare D.M."/>
            <person name="Beasley H."/>
            <person name="Beasley O."/>
            <person name="Bird C.P."/>
            <person name="Blakey S.E."/>
            <person name="Bray-Allen S."/>
            <person name="Brook J."/>
            <person name="Brown A.J."/>
            <person name="Brown J.Y."/>
            <person name="Burford D.C."/>
            <person name="Burrill W."/>
            <person name="Burton J."/>
            <person name="Carder C."/>
            <person name="Carter N.P."/>
            <person name="Chapman J.C."/>
            <person name="Clark S.Y."/>
            <person name="Clark G."/>
            <person name="Clee C.M."/>
            <person name="Clegg S."/>
            <person name="Cobley V."/>
            <person name="Collier R.E."/>
            <person name="Collins J.E."/>
            <person name="Colman L.K."/>
            <person name="Corby N.R."/>
            <person name="Coville G.J."/>
            <person name="Culley K.M."/>
            <person name="Dhami P."/>
            <person name="Davies J."/>
            <person name="Dunn M."/>
            <person name="Earthrowl M.E."/>
            <person name="Ellington A.E."/>
            <person name="Evans K.A."/>
            <person name="Faulkner L."/>
            <person name="Francis M.D."/>
            <person name="Frankish A."/>
            <person name="Frankland J."/>
            <person name="French L."/>
            <person name="Garner P."/>
            <person name="Garnett J."/>
            <person name="Ghori M.J."/>
            <person name="Gilby L.M."/>
            <person name="Gillson C.J."/>
            <person name="Glithero R.J."/>
            <person name="Grafham D.V."/>
            <person name="Grant M."/>
            <person name="Gribble S."/>
            <person name="Griffiths C."/>
            <person name="Griffiths M.N.D."/>
            <person name="Hall R."/>
            <person name="Halls K.S."/>
            <person name="Hammond S."/>
            <person name="Harley J.L."/>
            <person name="Hart E.A."/>
            <person name="Heath P.D."/>
            <person name="Heathcott R."/>
            <person name="Holmes S.J."/>
            <person name="Howden P.J."/>
            <person name="Howe K.L."/>
            <person name="Howell G.R."/>
            <person name="Huckle E."/>
            <person name="Humphray S.J."/>
            <person name="Humphries M.D."/>
            <person name="Hunt A.R."/>
            <person name="Johnson C.M."/>
            <person name="Joy A.A."/>
            <person name="Kay M."/>
            <person name="Keenan S.J."/>
            <person name="Kimberley A.M."/>
            <person name="King A."/>
            <person name="Laird G.K."/>
            <person name="Langford C."/>
            <person name="Lawlor S."/>
            <person name="Leongamornlert D.A."/>
            <person name="Leversha M."/>
            <person name="Lloyd C.R."/>
            <person name="Lloyd D.M."/>
            <person name="Loveland J.E."/>
            <person name="Lovell J."/>
            <person name="Martin S."/>
            <person name="Mashreghi-Mohammadi M."/>
            <person name="Maslen G.L."/>
            <person name="Matthews L."/>
            <person name="McCann O.T."/>
            <person name="McLaren S.J."/>
            <person name="McLay K."/>
            <person name="McMurray A."/>
            <person name="Moore M.J.F."/>
            <person name="Mullikin J.C."/>
            <person name="Niblett D."/>
            <person name="Nickerson T."/>
            <person name="Novik K.L."/>
            <person name="Oliver K."/>
            <person name="Overton-Larty E.K."/>
            <person name="Parker A."/>
            <person name="Patel R."/>
            <person name="Pearce A.V."/>
            <person name="Peck A.I."/>
            <person name="Phillimore B.J.C.T."/>
            <person name="Phillips S."/>
            <person name="Plumb R.W."/>
            <person name="Porter K.M."/>
            <person name="Ramsey Y."/>
            <person name="Ranby S.A."/>
            <person name="Rice C.M."/>
            <person name="Ross M.T."/>
            <person name="Searle S.M."/>
            <person name="Sehra H.K."/>
            <person name="Sheridan E."/>
            <person name="Skuce C.D."/>
            <person name="Smith S."/>
            <person name="Smith M."/>
            <person name="Spraggon L."/>
            <person name="Squares S.L."/>
            <person name="Steward C.A."/>
            <person name="Sycamore N."/>
            <person name="Tamlyn-Hall G."/>
            <person name="Tester J."/>
            <person name="Theaker A.J."/>
            <person name="Thomas D.W."/>
            <person name="Thorpe A."/>
            <person name="Tracey A."/>
            <person name="Tromans A."/>
            <person name="Tubby B."/>
            <person name="Wall M."/>
            <person name="Wallis J.M."/>
            <person name="West A.P."/>
            <person name="White S.S."/>
            <person name="Whitehead S.L."/>
            <person name="Whittaker H."/>
            <person name="Wild A."/>
            <person name="Willey D.J."/>
            <person name="Wilmer T.E."/>
            <person name="Wood J.M."/>
            <person name="Wray P.W."/>
            <person name="Wyatt J.C."/>
            <person name="Young L."/>
            <person name="Younger R.M."/>
            <person name="Bentley D.R."/>
            <person name="Coulson A."/>
            <person name="Durbin R.M."/>
            <person name="Hubbard T."/>
            <person name="Sulston J.E."/>
            <person name="Dunham I."/>
            <person name="Rogers J."/>
            <person name="Beck S."/>
        </authorList>
    </citation>
    <scope>NUCLEOTIDE SEQUENCE [LARGE SCALE GENOMIC DNA]</scope>
</reference>
<reference key="4">
    <citation type="journal article" date="2001" name="Oncogene">
        <title>Expression, cellular distribution and protein binding of the glioma amplified sequence (GAS41), a highly conserved putative transcription factor.</title>
        <authorList>
            <person name="Munnia A."/>
            <person name="Schuetz N."/>
            <person name="Romeike B.F.M."/>
            <person name="Maldener E."/>
            <person name="Glass B."/>
            <person name="Maas R."/>
            <person name="Nastainczyk W."/>
            <person name="Feiden W."/>
            <person name="Fischer U."/>
            <person name="Meese E."/>
        </authorList>
    </citation>
    <scope>SUBCELLULAR LOCATION</scope>
</reference>
<reference key="5">
    <citation type="journal article" date="2006" name="Oncogene">
        <title>QN1/KIAA1009: a new essential protein for chromosome segregation and mitotic spindle assembly.</title>
        <authorList>
            <person name="Leon A."/>
            <person name="Omri B."/>
            <person name="Gely A."/>
            <person name="Klein C."/>
            <person name="Crisanti P."/>
        </authorList>
    </citation>
    <scope>SUBCELLULAR LOCATION</scope>
</reference>
<reference key="6">
    <citation type="journal article" date="2009" name="Sci. Signal.">
        <title>Quantitative phosphoproteomic analysis of T cell receptor signaling reveals system-wide modulation of protein-protein interactions.</title>
        <authorList>
            <person name="Mayya V."/>
            <person name="Lundgren D.H."/>
            <person name="Hwang S.-I."/>
            <person name="Rezaul K."/>
            <person name="Wu L."/>
            <person name="Eng J.K."/>
            <person name="Rodionov V."/>
            <person name="Han D.K."/>
        </authorList>
    </citation>
    <scope>PHOSPHORYLATION [LARGE SCALE ANALYSIS] AT SER-474 AND SER-475</scope>
    <scope>IDENTIFICATION BY MASS SPECTROMETRY [LARGE SCALE ANALYSIS]</scope>
    <source>
        <tissue>Leukemic T-cell</tissue>
    </source>
</reference>
<reference key="7">
    <citation type="journal article" date="2013" name="J. Proteome Res.">
        <title>Toward a comprehensive characterization of a human cancer cell phosphoproteome.</title>
        <authorList>
            <person name="Zhou H."/>
            <person name="Di Palma S."/>
            <person name="Preisinger C."/>
            <person name="Peng M."/>
            <person name="Polat A.N."/>
            <person name="Heck A.J."/>
            <person name="Mohammed S."/>
        </authorList>
    </citation>
    <scope>PHOSPHORYLATION [LARGE SCALE ANALYSIS] AT SER-474</scope>
    <scope>IDENTIFICATION BY MASS SPECTROMETRY [LARGE SCALE ANALYSIS]</scope>
    <source>
        <tissue>Erythroleukemia</tissue>
    </source>
</reference>
<reference key="8">
    <citation type="journal article" date="2013" name="Nat. Cell Biol.">
        <title>CEP162 is an axoneme-recognition protein promoting ciliary transition zone assembly at the cilia base.</title>
        <authorList>
            <person name="Wang W.J."/>
            <person name="Tay H.G."/>
            <person name="Soni R."/>
            <person name="Perumal G.S."/>
            <person name="Goll M.G."/>
            <person name="Macaluso F.P."/>
            <person name="Asara J.M."/>
            <person name="Amack J.D."/>
            <person name="Bryan Tsou M.F."/>
        </authorList>
    </citation>
    <scope>FUNCTION</scope>
    <scope>SUBCELLULAR LOCATION</scope>
    <scope>INTERACTION WITH CEP290</scope>
</reference>